<comment type="function">
    <text>The metallothioneins are involved in the cellular sequestration of toxic metal ions and regulation of essential trace elements. This isoform binds exclusively copper.</text>
</comment>
<comment type="domain">
    <text>14 cysteine residues are arranged in C-X-C groups. These are thought to be the metal-binding sites in other metallothioneins.</text>
</comment>
<comment type="similarity">
    <text evidence="2">Belongs to the metallothionein superfamily. Type 2 family.</text>
</comment>
<name>MTCU_HELPO</name>
<keyword id="KW-0007">Acetylation</keyword>
<keyword id="KW-0104">Cadmium</keyword>
<keyword id="KW-0186">Copper</keyword>
<keyword id="KW-0903">Direct protein sequencing</keyword>
<keyword id="KW-0479">Metal-binding</keyword>
<keyword id="KW-0480">Metal-thiolate cluster</keyword>
<evidence type="ECO:0000269" key="1">
    <source>
    </source>
</evidence>
<evidence type="ECO:0000305" key="2"/>
<evidence type="ECO:0000305" key="3">
    <source>
    </source>
</evidence>
<sequence length="64" mass="6205">SGRGKNCGGACNSNPCSCGNDCKCGAGCNCDRCSSCHCSNDDCKCGSQCTGSGSCKCGSACGCK</sequence>
<reference key="1">
    <citation type="journal article" date="1997" name="Nature">
        <title>Metallothionein in snail Cd and Cu metabolism.</title>
        <authorList>
            <person name="Dallinger R."/>
            <person name="Berger B."/>
            <person name="Hunziker P.E."/>
            <person name="Kaegi J.H.R."/>
        </authorList>
    </citation>
    <scope>PROTEIN SEQUENCE</scope>
    <scope>ACETYLATION AT SER-1</scope>
    <source>
        <tissue>Mantle</tissue>
    </source>
</reference>
<feature type="chain" id="PRO_0000197338" description="Copper-metallothionein">
    <location>
        <begin position="1"/>
        <end position="64"/>
    </location>
</feature>
<feature type="binding site" evidence="3">
    <location>
        <position position="7"/>
    </location>
    <ligand>
        <name>Cu(+)</name>
        <dbReference type="ChEBI" id="CHEBI:49552"/>
        <label>1</label>
    </ligand>
</feature>
<feature type="binding site" evidence="3">
    <location>
        <position position="11"/>
    </location>
    <ligand>
        <name>Cu(+)</name>
        <dbReference type="ChEBI" id="CHEBI:49552"/>
        <label>1</label>
    </ligand>
</feature>
<feature type="binding site" evidence="3">
    <location>
        <position position="11"/>
    </location>
    <ligand>
        <name>Cu(+)</name>
        <dbReference type="ChEBI" id="CHEBI:49552"/>
        <label>2</label>
    </ligand>
</feature>
<feature type="binding site" evidence="3">
    <location>
        <position position="16"/>
    </location>
    <ligand>
        <name>Cu(+)</name>
        <dbReference type="ChEBI" id="CHEBI:49552"/>
        <label>2</label>
    </ligand>
</feature>
<feature type="binding site" evidence="3">
    <location>
        <position position="18"/>
    </location>
    <ligand>
        <name>Cu(+)</name>
        <dbReference type="ChEBI" id="CHEBI:49552"/>
        <label>3</label>
    </ligand>
</feature>
<feature type="binding site" evidence="3">
    <location>
        <position position="22"/>
    </location>
    <ligand>
        <name>Cu(+)</name>
        <dbReference type="ChEBI" id="CHEBI:49552"/>
        <label>3</label>
    </ligand>
</feature>
<feature type="binding site" evidence="3">
    <location>
        <position position="24"/>
    </location>
    <ligand>
        <name>Cu(+)</name>
        <dbReference type="ChEBI" id="CHEBI:49552"/>
        <label>1</label>
    </ligand>
</feature>
<feature type="binding site" evidence="3">
    <location>
        <position position="24"/>
    </location>
    <ligand>
        <name>Cu(+)</name>
        <dbReference type="ChEBI" id="CHEBI:49552"/>
        <label>3</label>
    </ligand>
</feature>
<feature type="binding site" evidence="3">
    <location>
        <position position="28"/>
    </location>
    <ligand>
        <name>Cu(+)</name>
        <dbReference type="ChEBI" id="CHEBI:49552"/>
        <label>1</label>
    </ligand>
</feature>
<feature type="binding site" evidence="3">
    <location>
        <position position="30"/>
    </location>
    <ligand>
        <name>Cu(+)</name>
        <dbReference type="ChEBI" id="CHEBI:49552"/>
        <label>2</label>
    </ligand>
</feature>
<feature type="binding site" evidence="3">
    <location>
        <position position="33"/>
    </location>
    <ligand>
        <name>Cu(+)</name>
        <dbReference type="ChEBI" id="CHEBI:49552"/>
        <label>2</label>
    </ligand>
</feature>
<feature type="binding site" evidence="3">
    <location>
        <position position="33"/>
    </location>
    <ligand>
        <name>Cu(+)</name>
        <dbReference type="ChEBI" id="CHEBI:49552"/>
        <label>3</label>
    </ligand>
</feature>
<feature type="binding site" evidence="3">
    <location>
        <position position="36"/>
    </location>
    <ligand>
        <name>Cu(+)</name>
        <dbReference type="ChEBI" id="CHEBI:49552"/>
        <label>4</label>
    </ligand>
</feature>
<feature type="binding site" evidence="3">
    <location>
        <position position="38"/>
    </location>
    <ligand>
        <name>Cu(+)</name>
        <dbReference type="ChEBI" id="CHEBI:49552"/>
        <label>5</label>
    </ligand>
</feature>
<feature type="binding site" evidence="3">
    <location>
        <position position="43"/>
    </location>
    <ligand>
        <name>Cu(+)</name>
        <dbReference type="ChEBI" id="CHEBI:49552"/>
        <label>5</label>
    </ligand>
</feature>
<feature type="binding site" evidence="3">
    <location>
        <position position="45"/>
    </location>
    <ligand>
        <name>Cu(+)</name>
        <dbReference type="ChEBI" id="CHEBI:49552"/>
        <label>5</label>
    </ligand>
</feature>
<feature type="binding site" evidence="3">
    <location>
        <position position="45"/>
    </location>
    <ligand>
        <name>Cu(+)</name>
        <dbReference type="ChEBI" id="CHEBI:49552"/>
        <label>6</label>
    </ligand>
</feature>
<feature type="binding site" evidence="3">
    <location>
        <position position="49"/>
    </location>
    <ligand>
        <name>Cu(+)</name>
        <dbReference type="ChEBI" id="CHEBI:49552"/>
        <label>4</label>
    </ligand>
</feature>
<feature type="binding site" evidence="3">
    <location>
        <position position="49"/>
    </location>
    <ligand>
        <name>Cu(+)</name>
        <dbReference type="ChEBI" id="CHEBI:49552"/>
        <label>5</label>
    </ligand>
</feature>
<feature type="binding site" evidence="3">
    <location>
        <position position="55"/>
    </location>
    <ligand>
        <name>Cu(+)</name>
        <dbReference type="ChEBI" id="CHEBI:49552"/>
        <label>4</label>
    </ligand>
</feature>
<feature type="binding site" evidence="3">
    <location>
        <position position="57"/>
    </location>
    <ligand>
        <name>Cu(+)</name>
        <dbReference type="ChEBI" id="CHEBI:49552"/>
        <label>6</label>
    </ligand>
</feature>
<feature type="binding site" evidence="3">
    <location>
        <position position="61"/>
    </location>
    <ligand>
        <name>Cu(+)</name>
        <dbReference type="ChEBI" id="CHEBI:49552"/>
        <label>6</label>
    </ligand>
</feature>
<feature type="binding site" evidence="3">
    <location>
        <position position="63"/>
    </location>
    <ligand>
        <name>Cu(+)</name>
        <dbReference type="ChEBI" id="CHEBI:49552"/>
        <label>4</label>
    </ligand>
</feature>
<feature type="binding site" evidence="3">
    <location>
        <position position="63"/>
    </location>
    <ligand>
        <name>Cu(+)</name>
        <dbReference type="ChEBI" id="CHEBI:49552"/>
        <label>6</label>
    </ligand>
</feature>
<feature type="modified residue" description="N-acetylserine" evidence="1">
    <location>
        <position position="1"/>
    </location>
</feature>
<dbReference type="SMR" id="P55947"/>
<dbReference type="iPTMnet" id="P55947"/>
<dbReference type="GO" id="GO:0046872">
    <property type="term" value="F:metal ion binding"/>
    <property type="evidence" value="ECO:0007669"/>
    <property type="project" value="UniProtKB-KW"/>
</dbReference>
<dbReference type="InterPro" id="IPR001008">
    <property type="entry name" value="Metalthion_mollusc"/>
</dbReference>
<dbReference type="PRINTS" id="PR00875">
    <property type="entry name" value="MTMOLLUSC"/>
</dbReference>
<accession>P55947</accession>
<protein>
    <recommendedName>
        <fullName>Copper-metallothionein</fullName>
    </recommendedName>
    <alternativeName>
        <fullName>Cu-MT</fullName>
    </alternativeName>
</protein>
<organism>
    <name type="scientific">Helix pomatia</name>
    <name type="common">Roman snail</name>
    <name type="synonym">Edible snail</name>
    <dbReference type="NCBI Taxonomy" id="6536"/>
    <lineage>
        <taxon>Eukaryota</taxon>
        <taxon>Metazoa</taxon>
        <taxon>Spiralia</taxon>
        <taxon>Lophotrochozoa</taxon>
        <taxon>Mollusca</taxon>
        <taxon>Gastropoda</taxon>
        <taxon>Heterobranchia</taxon>
        <taxon>Euthyneura</taxon>
        <taxon>Panpulmonata</taxon>
        <taxon>Eupulmonata</taxon>
        <taxon>Stylommatophora</taxon>
        <taxon>Helicina</taxon>
        <taxon>Helicoidea</taxon>
        <taxon>Helicidae</taxon>
        <taxon>Helix</taxon>
    </lineage>
</organism>
<proteinExistence type="evidence at protein level"/>